<sequence length="206" mass="21364">MTVSVDDLCVTRGGVPILSGVSFDLAEGAALILQGPNGSGKTTLLRTLAGLQPPLAGQISGTEDRIAYAAHSDGLKSMLSVAENLRFWAAVFGRSDIAPALQAFDLHDLADRLAGTLSAGQKRRLGLARLLVTGRPVWMLDEPTVSLDKRAVEMFAAAVEAHLATGGSALIATHIDLGLRDAQVLDVGPLRASPTALAGASDEAFL</sequence>
<comment type="function">
    <text evidence="1">Part of the ABC transporter complex CcmAB involved in the biogenesis of c-type cytochromes; once thought to export heme, this seems not to be the case, but its exact role is uncertain. Responsible for energy coupling to the transport system.</text>
</comment>
<comment type="catalytic activity">
    <reaction evidence="1">
        <text>heme b(in) + ATP + H2O = heme b(out) + ADP + phosphate + H(+)</text>
        <dbReference type="Rhea" id="RHEA:19261"/>
        <dbReference type="ChEBI" id="CHEBI:15377"/>
        <dbReference type="ChEBI" id="CHEBI:15378"/>
        <dbReference type="ChEBI" id="CHEBI:30616"/>
        <dbReference type="ChEBI" id="CHEBI:43474"/>
        <dbReference type="ChEBI" id="CHEBI:60344"/>
        <dbReference type="ChEBI" id="CHEBI:456216"/>
        <dbReference type="EC" id="7.6.2.5"/>
    </reaction>
</comment>
<comment type="subunit">
    <text evidence="1">The complex is composed of two ATP-binding proteins (CcmA) and two transmembrane proteins (CcmB).</text>
</comment>
<comment type="subcellular location">
    <subcellularLocation>
        <location evidence="1">Cell inner membrane</location>
        <topology evidence="1">Peripheral membrane protein</topology>
    </subcellularLocation>
</comment>
<comment type="similarity">
    <text evidence="1">Belongs to the ABC transporter superfamily. CcmA exporter (TC 3.A.1.107) family.</text>
</comment>
<feature type="chain" id="PRO_0000271953" description="Cytochrome c biogenesis ATP-binding export protein CcmA">
    <location>
        <begin position="1"/>
        <end position="206"/>
    </location>
</feature>
<feature type="domain" description="ABC transporter" evidence="1">
    <location>
        <begin position="3"/>
        <end position="206"/>
    </location>
</feature>
<feature type="binding site" evidence="1">
    <location>
        <begin position="35"/>
        <end position="42"/>
    </location>
    <ligand>
        <name>ATP</name>
        <dbReference type="ChEBI" id="CHEBI:30616"/>
    </ligand>
</feature>
<protein>
    <recommendedName>
        <fullName evidence="1">Cytochrome c biogenesis ATP-binding export protein CcmA</fullName>
        <ecNumber evidence="1">7.6.2.5</ecNumber>
    </recommendedName>
    <alternativeName>
        <fullName evidence="1">Heme exporter protein A</fullName>
    </alternativeName>
</protein>
<name>CCMA_ROSDO</name>
<gene>
    <name evidence="1" type="primary">ccmA</name>
    <name type="ordered locus">RD1_2547</name>
</gene>
<proteinExistence type="inferred from homology"/>
<accession>Q166I9</accession>
<reference key="1">
    <citation type="journal article" date="2007" name="J. Bacteriol.">
        <title>The complete genome sequence of Roseobacter denitrificans reveals a mixotrophic rather than photosynthetic metabolism.</title>
        <authorList>
            <person name="Swingley W.D."/>
            <person name="Sadekar S."/>
            <person name="Mastrian S.D."/>
            <person name="Matthies H.J."/>
            <person name="Hao J."/>
            <person name="Ramos H."/>
            <person name="Acharya C.R."/>
            <person name="Conrad A.L."/>
            <person name="Taylor H.L."/>
            <person name="Dejesa L.C."/>
            <person name="Shah M.K."/>
            <person name="O'Huallachain M.E."/>
            <person name="Lince M.T."/>
            <person name="Blankenship R.E."/>
            <person name="Beatty J.T."/>
            <person name="Touchman J.W."/>
        </authorList>
    </citation>
    <scope>NUCLEOTIDE SEQUENCE [LARGE SCALE GENOMIC DNA]</scope>
    <source>
        <strain>ATCC 33942 / OCh 114</strain>
    </source>
</reference>
<keyword id="KW-0067">ATP-binding</keyword>
<keyword id="KW-0997">Cell inner membrane</keyword>
<keyword id="KW-1003">Cell membrane</keyword>
<keyword id="KW-0201">Cytochrome c-type biogenesis</keyword>
<keyword id="KW-0472">Membrane</keyword>
<keyword id="KW-0547">Nucleotide-binding</keyword>
<keyword id="KW-1185">Reference proteome</keyword>
<keyword id="KW-1278">Translocase</keyword>
<keyword id="KW-0813">Transport</keyword>
<evidence type="ECO:0000255" key="1">
    <source>
        <dbReference type="HAMAP-Rule" id="MF_01707"/>
    </source>
</evidence>
<organism>
    <name type="scientific">Roseobacter denitrificans (strain ATCC 33942 / OCh 114)</name>
    <name type="common">Erythrobacter sp. (strain OCh 114)</name>
    <name type="synonym">Roseobacter denitrificans</name>
    <dbReference type="NCBI Taxonomy" id="375451"/>
    <lineage>
        <taxon>Bacteria</taxon>
        <taxon>Pseudomonadati</taxon>
        <taxon>Pseudomonadota</taxon>
        <taxon>Alphaproteobacteria</taxon>
        <taxon>Rhodobacterales</taxon>
        <taxon>Roseobacteraceae</taxon>
        <taxon>Roseobacter</taxon>
    </lineage>
</organism>
<dbReference type="EC" id="7.6.2.5" evidence="1"/>
<dbReference type="EMBL" id="CP000362">
    <property type="protein sequence ID" value="ABG32104.1"/>
    <property type="molecule type" value="Genomic_DNA"/>
</dbReference>
<dbReference type="RefSeq" id="WP_011568721.1">
    <property type="nucleotide sequence ID" value="NC_008209.1"/>
</dbReference>
<dbReference type="SMR" id="Q166I9"/>
<dbReference type="STRING" id="375451.RD1_2547"/>
<dbReference type="KEGG" id="rde:RD1_2547"/>
<dbReference type="eggNOG" id="COG4133">
    <property type="taxonomic scope" value="Bacteria"/>
</dbReference>
<dbReference type="HOGENOM" id="CLU_000604_1_2_5"/>
<dbReference type="OrthoDB" id="9800654at2"/>
<dbReference type="Proteomes" id="UP000007029">
    <property type="component" value="Chromosome"/>
</dbReference>
<dbReference type="GO" id="GO:0005886">
    <property type="term" value="C:plasma membrane"/>
    <property type="evidence" value="ECO:0007669"/>
    <property type="project" value="UniProtKB-SubCell"/>
</dbReference>
<dbReference type="GO" id="GO:0015439">
    <property type="term" value="F:ABC-type heme transporter activity"/>
    <property type="evidence" value="ECO:0007669"/>
    <property type="project" value="UniProtKB-EC"/>
</dbReference>
<dbReference type="GO" id="GO:0005524">
    <property type="term" value="F:ATP binding"/>
    <property type="evidence" value="ECO:0007669"/>
    <property type="project" value="UniProtKB-KW"/>
</dbReference>
<dbReference type="GO" id="GO:0016887">
    <property type="term" value="F:ATP hydrolysis activity"/>
    <property type="evidence" value="ECO:0007669"/>
    <property type="project" value="InterPro"/>
</dbReference>
<dbReference type="GO" id="GO:0017004">
    <property type="term" value="P:cytochrome complex assembly"/>
    <property type="evidence" value="ECO:0007669"/>
    <property type="project" value="UniProtKB-KW"/>
</dbReference>
<dbReference type="Gene3D" id="3.40.50.300">
    <property type="entry name" value="P-loop containing nucleotide triphosphate hydrolases"/>
    <property type="match status" value="1"/>
</dbReference>
<dbReference type="InterPro" id="IPR003593">
    <property type="entry name" value="AAA+_ATPase"/>
</dbReference>
<dbReference type="InterPro" id="IPR003439">
    <property type="entry name" value="ABC_transporter-like_ATP-bd"/>
</dbReference>
<dbReference type="InterPro" id="IPR017871">
    <property type="entry name" value="ABC_transporter-like_CS"/>
</dbReference>
<dbReference type="InterPro" id="IPR005895">
    <property type="entry name" value="ABC_transptr_haem_export_CcmA"/>
</dbReference>
<dbReference type="InterPro" id="IPR027417">
    <property type="entry name" value="P-loop_NTPase"/>
</dbReference>
<dbReference type="NCBIfam" id="TIGR01189">
    <property type="entry name" value="ccmA"/>
    <property type="match status" value="1"/>
</dbReference>
<dbReference type="PANTHER" id="PTHR43499">
    <property type="entry name" value="ABC TRANSPORTER I FAMILY MEMBER 1"/>
    <property type="match status" value="1"/>
</dbReference>
<dbReference type="PANTHER" id="PTHR43499:SF1">
    <property type="entry name" value="ABC TRANSPORTER I FAMILY MEMBER 1"/>
    <property type="match status" value="1"/>
</dbReference>
<dbReference type="Pfam" id="PF00005">
    <property type="entry name" value="ABC_tran"/>
    <property type="match status" value="1"/>
</dbReference>
<dbReference type="SMART" id="SM00382">
    <property type="entry name" value="AAA"/>
    <property type="match status" value="1"/>
</dbReference>
<dbReference type="SUPFAM" id="SSF52540">
    <property type="entry name" value="P-loop containing nucleoside triphosphate hydrolases"/>
    <property type="match status" value="1"/>
</dbReference>
<dbReference type="PROSITE" id="PS00211">
    <property type="entry name" value="ABC_TRANSPORTER_1"/>
    <property type="match status" value="1"/>
</dbReference>
<dbReference type="PROSITE" id="PS50893">
    <property type="entry name" value="ABC_TRANSPORTER_2"/>
    <property type="match status" value="1"/>
</dbReference>
<dbReference type="PROSITE" id="PS51243">
    <property type="entry name" value="CCMA"/>
    <property type="match status" value="1"/>
</dbReference>